<dbReference type="EC" id="2.7.1.25"/>
<dbReference type="EMBL" id="BA000002">
    <property type="protein sequence ID" value="BAA80181.2"/>
    <property type="molecule type" value="Genomic_DNA"/>
</dbReference>
<dbReference type="PIR" id="G72590">
    <property type="entry name" value="G72590"/>
</dbReference>
<dbReference type="RefSeq" id="WP_010866220.1">
    <property type="nucleotide sequence ID" value="NC_000854.2"/>
</dbReference>
<dbReference type="PDB" id="2YVU">
    <property type="method" value="X-ray"/>
    <property type="resolution" value="2.10 A"/>
    <property type="chains" value="A/B=2-183"/>
</dbReference>
<dbReference type="PDBsum" id="2YVU"/>
<dbReference type="SMR" id="Q9YCR6"/>
<dbReference type="STRING" id="272557.APE_1195.1"/>
<dbReference type="EnsemblBacteria" id="BAA80181">
    <property type="protein sequence ID" value="BAA80181"/>
    <property type="gene ID" value="APE_1195.1"/>
</dbReference>
<dbReference type="GeneID" id="1445849"/>
<dbReference type="KEGG" id="ape:APE_1195.1"/>
<dbReference type="PATRIC" id="fig|272557.25.peg.823"/>
<dbReference type="eggNOG" id="arCOG01040">
    <property type="taxonomic scope" value="Archaea"/>
</dbReference>
<dbReference type="UniPathway" id="UPA00140">
    <property type="reaction ID" value="UER00205"/>
</dbReference>
<dbReference type="EvolutionaryTrace" id="Q9YCR6"/>
<dbReference type="Proteomes" id="UP000002518">
    <property type="component" value="Chromosome"/>
</dbReference>
<dbReference type="GO" id="GO:0005737">
    <property type="term" value="C:cytoplasm"/>
    <property type="evidence" value="ECO:0007669"/>
    <property type="project" value="TreeGrafter"/>
</dbReference>
<dbReference type="GO" id="GO:0004020">
    <property type="term" value="F:adenylylsulfate kinase activity"/>
    <property type="evidence" value="ECO:0007669"/>
    <property type="project" value="UniProtKB-UniRule"/>
</dbReference>
<dbReference type="GO" id="GO:0005524">
    <property type="term" value="F:ATP binding"/>
    <property type="evidence" value="ECO:0007669"/>
    <property type="project" value="UniProtKB-UniRule"/>
</dbReference>
<dbReference type="GO" id="GO:0004781">
    <property type="term" value="F:sulfate adenylyltransferase (ATP) activity"/>
    <property type="evidence" value="ECO:0007669"/>
    <property type="project" value="TreeGrafter"/>
</dbReference>
<dbReference type="GO" id="GO:0070814">
    <property type="term" value="P:hydrogen sulfide biosynthetic process"/>
    <property type="evidence" value="ECO:0007669"/>
    <property type="project" value="UniProtKB-UniRule"/>
</dbReference>
<dbReference type="GO" id="GO:0010134">
    <property type="term" value="P:sulfate assimilation via adenylyl sulfate reduction"/>
    <property type="evidence" value="ECO:0007669"/>
    <property type="project" value="TreeGrafter"/>
</dbReference>
<dbReference type="GO" id="GO:0019379">
    <property type="term" value="P:sulfate assimilation, phosphoadenylyl sulfate reduction by phosphoadenylyl-sulfate reductase (thioredoxin)"/>
    <property type="evidence" value="ECO:0007669"/>
    <property type="project" value="TreeGrafter"/>
</dbReference>
<dbReference type="CDD" id="cd02027">
    <property type="entry name" value="APSK"/>
    <property type="match status" value="1"/>
</dbReference>
<dbReference type="Gene3D" id="3.40.50.300">
    <property type="entry name" value="P-loop containing nucleotide triphosphate hydrolases"/>
    <property type="match status" value="1"/>
</dbReference>
<dbReference type="HAMAP" id="MF_00065">
    <property type="entry name" value="Adenylyl_sulf_kinase"/>
    <property type="match status" value="1"/>
</dbReference>
<dbReference type="InterPro" id="IPR002891">
    <property type="entry name" value="APS_kinase"/>
</dbReference>
<dbReference type="InterPro" id="IPR027417">
    <property type="entry name" value="P-loop_NTPase"/>
</dbReference>
<dbReference type="InterPro" id="IPR050512">
    <property type="entry name" value="Sulf_AdTrans/APS_kinase"/>
</dbReference>
<dbReference type="NCBIfam" id="TIGR00455">
    <property type="entry name" value="apsK"/>
    <property type="match status" value="1"/>
</dbReference>
<dbReference type="NCBIfam" id="NF003013">
    <property type="entry name" value="PRK03846.1"/>
    <property type="match status" value="1"/>
</dbReference>
<dbReference type="NCBIfam" id="NF004041">
    <property type="entry name" value="PRK05541.1"/>
    <property type="match status" value="1"/>
</dbReference>
<dbReference type="PANTHER" id="PTHR42700">
    <property type="entry name" value="SULFATE ADENYLYLTRANSFERASE"/>
    <property type="match status" value="1"/>
</dbReference>
<dbReference type="PANTHER" id="PTHR42700:SF1">
    <property type="entry name" value="SULFATE ADENYLYLTRANSFERASE"/>
    <property type="match status" value="1"/>
</dbReference>
<dbReference type="Pfam" id="PF01583">
    <property type="entry name" value="APS_kinase"/>
    <property type="match status" value="1"/>
</dbReference>
<dbReference type="SUPFAM" id="SSF52540">
    <property type="entry name" value="P-loop containing nucleoside triphosphate hydrolases"/>
    <property type="match status" value="1"/>
</dbReference>
<sequence>MTTYKCIEKGIVVWLTGLPGSGKTTIATRLADLLQKEGYRVEVLDGDWARTTVSEGAGFTREERLRHLKRIAWIARLLARNGVIVICSFVSPYKQARNMVRRIVEEEGIPFLEIYVKASLEEVIRRDPKGLYKKALKGELENFTGITDPYEPPENPQLVLDTESNTIEHNVSYLYSLVKAVIE</sequence>
<comment type="function">
    <text>Catalyzes the synthesis of activated sulfate.</text>
</comment>
<comment type="catalytic activity">
    <reaction>
        <text>adenosine 5'-phosphosulfate + ATP = 3'-phosphoadenylyl sulfate + ADP + H(+)</text>
        <dbReference type="Rhea" id="RHEA:24152"/>
        <dbReference type="ChEBI" id="CHEBI:15378"/>
        <dbReference type="ChEBI" id="CHEBI:30616"/>
        <dbReference type="ChEBI" id="CHEBI:58243"/>
        <dbReference type="ChEBI" id="CHEBI:58339"/>
        <dbReference type="ChEBI" id="CHEBI:456216"/>
        <dbReference type="EC" id="2.7.1.25"/>
    </reaction>
</comment>
<comment type="pathway">
    <text>Sulfur metabolism; hydrogen sulfide biosynthesis; sulfite from sulfate: step 2/3.</text>
</comment>
<comment type="similarity">
    <text evidence="2">Belongs to the APS kinase family.</text>
</comment>
<name>CYSC_AERPE</name>
<proteinExistence type="evidence at protein level"/>
<gene>
    <name type="primary">cysC</name>
    <name type="ordered locus">APE_1195.1</name>
</gene>
<accession>Q9YCR6</accession>
<evidence type="ECO:0000250" key="1"/>
<evidence type="ECO:0000305" key="2"/>
<evidence type="ECO:0007829" key="3">
    <source>
        <dbReference type="PDB" id="2YVU"/>
    </source>
</evidence>
<feature type="chain" id="PRO_0000105928" description="Probable adenylyl-sulfate kinase">
    <location>
        <begin position="1"/>
        <end position="183"/>
    </location>
</feature>
<feature type="active site" description="Phosphoserine intermediate" evidence="1">
    <location>
        <position position="91"/>
    </location>
</feature>
<feature type="binding site" evidence="1">
    <location>
        <begin position="17"/>
        <end position="24"/>
    </location>
    <ligand>
        <name>ATP</name>
        <dbReference type="ChEBI" id="CHEBI:30616"/>
    </ligand>
</feature>
<feature type="strand" evidence="3">
    <location>
        <begin position="11"/>
        <end position="16"/>
    </location>
</feature>
<feature type="helix" evidence="3">
    <location>
        <begin position="23"/>
        <end position="36"/>
    </location>
</feature>
<feature type="strand" evidence="3">
    <location>
        <begin position="41"/>
        <end position="45"/>
    </location>
</feature>
<feature type="helix" evidence="3">
    <location>
        <begin position="46"/>
        <end position="50"/>
    </location>
</feature>
<feature type="turn" evidence="3">
    <location>
        <begin position="51"/>
        <end position="56"/>
    </location>
</feature>
<feature type="helix" evidence="3">
    <location>
        <begin position="61"/>
        <end position="79"/>
    </location>
</feature>
<feature type="turn" evidence="3">
    <location>
        <begin position="80"/>
        <end position="82"/>
    </location>
</feature>
<feature type="strand" evidence="3">
    <location>
        <begin position="84"/>
        <end position="88"/>
    </location>
</feature>
<feature type="helix" evidence="3">
    <location>
        <begin position="94"/>
        <end position="106"/>
    </location>
</feature>
<feature type="strand" evidence="3">
    <location>
        <begin position="111"/>
        <end position="117"/>
    </location>
</feature>
<feature type="helix" evidence="3">
    <location>
        <begin position="120"/>
        <end position="126"/>
    </location>
</feature>
<feature type="helix" evidence="3">
    <location>
        <begin position="128"/>
        <end position="136"/>
    </location>
</feature>
<feature type="helix" evidence="3">
    <location>
        <begin position="144"/>
        <end position="147"/>
    </location>
</feature>
<feature type="strand" evidence="3">
    <location>
        <begin position="157"/>
        <end position="161"/>
    </location>
</feature>
<feature type="turn" evidence="3">
    <location>
        <begin position="162"/>
        <end position="164"/>
    </location>
</feature>
<feature type="helix" evidence="3">
    <location>
        <begin position="167"/>
        <end position="181"/>
    </location>
</feature>
<protein>
    <recommendedName>
        <fullName>Probable adenylyl-sulfate kinase</fullName>
        <ecNumber>2.7.1.25</ecNumber>
    </recommendedName>
    <alternativeName>
        <fullName>APS kinase</fullName>
    </alternativeName>
    <alternativeName>
        <fullName>ATP adenosine-5'-phosphosulfate 3'-phosphotransferase</fullName>
    </alternativeName>
    <alternativeName>
        <fullName>Adenosine-5'-phosphosulfate kinase</fullName>
    </alternativeName>
</protein>
<organism>
    <name type="scientific">Aeropyrum pernix (strain ATCC 700893 / DSM 11879 / JCM 9820 / NBRC 100138 / K1)</name>
    <dbReference type="NCBI Taxonomy" id="272557"/>
    <lineage>
        <taxon>Archaea</taxon>
        <taxon>Thermoproteota</taxon>
        <taxon>Thermoprotei</taxon>
        <taxon>Desulfurococcales</taxon>
        <taxon>Desulfurococcaceae</taxon>
        <taxon>Aeropyrum</taxon>
    </lineage>
</organism>
<keyword id="KW-0002">3D-structure</keyword>
<keyword id="KW-0067">ATP-binding</keyword>
<keyword id="KW-0418">Kinase</keyword>
<keyword id="KW-0547">Nucleotide-binding</keyword>
<keyword id="KW-0597">Phosphoprotein</keyword>
<keyword id="KW-1185">Reference proteome</keyword>
<keyword id="KW-0808">Transferase</keyword>
<reference key="1">
    <citation type="journal article" date="1999" name="DNA Res.">
        <title>Complete genome sequence of an aerobic hyper-thermophilic crenarchaeon, Aeropyrum pernix K1.</title>
        <authorList>
            <person name="Kawarabayasi Y."/>
            <person name="Hino Y."/>
            <person name="Horikawa H."/>
            <person name="Yamazaki S."/>
            <person name="Haikawa Y."/>
            <person name="Jin-no K."/>
            <person name="Takahashi M."/>
            <person name="Sekine M."/>
            <person name="Baba S."/>
            <person name="Ankai A."/>
            <person name="Kosugi H."/>
            <person name="Hosoyama A."/>
            <person name="Fukui S."/>
            <person name="Nagai Y."/>
            <person name="Nishijima K."/>
            <person name="Nakazawa H."/>
            <person name="Takamiya M."/>
            <person name="Masuda S."/>
            <person name="Funahashi T."/>
            <person name="Tanaka T."/>
            <person name="Kudoh Y."/>
            <person name="Yamazaki J."/>
            <person name="Kushida N."/>
            <person name="Oguchi A."/>
            <person name="Aoki K."/>
            <person name="Kubota K."/>
            <person name="Nakamura Y."/>
            <person name="Nomura N."/>
            <person name="Sako Y."/>
            <person name="Kikuchi H."/>
        </authorList>
    </citation>
    <scope>NUCLEOTIDE SEQUENCE [LARGE SCALE GENOMIC DNA]</scope>
    <source>
        <strain>ATCC 700893 / DSM 11879 / JCM 9820 / NBRC 100138 / K1</strain>
    </source>
</reference>